<name>ATPF_XYLFM</name>
<protein>
    <recommendedName>
        <fullName evidence="1">ATP synthase subunit b</fullName>
    </recommendedName>
    <alternativeName>
        <fullName evidence="1">ATP synthase F(0) sector subunit b</fullName>
    </alternativeName>
    <alternativeName>
        <fullName evidence="1">ATPase subunit I</fullName>
    </alternativeName>
    <alternativeName>
        <fullName evidence="1">F-type ATPase subunit b</fullName>
        <shortName evidence="1">F-ATPase subunit b</shortName>
    </alternativeName>
</protein>
<accession>B0U5A2</accession>
<comment type="function">
    <text evidence="1">F(1)F(0) ATP synthase produces ATP from ADP in the presence of a proton or sodium gradient. F-type ATPases consist of two structural domains, F(1) containing the extramembraneous catalytic core and F(0) containing the membrane proton channel, linked together by a central stalk and a peripheral stalk. During catalysis, ATP synthesis in the catalytic domain of F(1) is coupled via a rotary mechanism of the central stalk subunits to proton translocation.</text>
</comment>
<comment type="function">
    <text evidence="1">Component of the F(0) channel, it forms part of the peripheral stalk, linking F(1) to F(0).</text>
</comment>
<comment type="subunit">
    <text evidence="1">F-type ATPases have 2 components, F(1) - the catalytic core - and F(0) - the membrane proton channel. F(1) has five subunits: alpha(3), beta(3), gamma(1), delta(1), epsilon(1). F(0) has three main subunits: a(1), b(2) and c(10-14). The alpha and beta chains form an alternating ring which encloses part of the gamma chain. F(1) is attached to F(0) by a central stalk formed by the gamma and epsilon chains, while a peripheral stalk is formed by the delta and b chains.</text>
</comment>
<comment type="subcellular location">
    <subcellularLocation>
        <location evidence="1">Cell inner membrane</location>
        <topology evidence="1">Single-pass membrane protein</topology>
    </subcellularLocation>
</comment>
<comment type="similarity">
    <text evidence="1">Belongs to the ATPase B chain family.</text>
</comment>
<comment type="sequence caution" evidence="2">
    <conflict type="erroneous initiation">
        <sequence resource="EMBL-CDS" id="ACA11498"/>
    </conflict>
</comment>
<gene>
    <name evidence="1" type="primary">atpF</name>
    <name type="ordered locus">Xfasm12_0489</name>
</gene>
<reference key="1">
    <citation type="journal article" date="2010" name="J. Bacteriol.">
        <title>Whole genome sequences of two Xylella fastidiosa strains (M12 and M23) causing almond leaf scorch disease in California.</title>
        <authorList>
            <person name="Chen J."/>
            <person name="Xie G."/>
            <person name="Han S."/>
            <person name="Chertkov O."/>
            <person name="Sims D."/>
            <person name="Civerolo E.L."/>
        </authorList>
    </citation>
    <scope>NUCLEOTIDE SEQUENCE [LARGE SCALE GENOMIC DNA]</scope>
    <source>
        <strain>M12</strain>
    </source>
</reference>
<feature type="chain" id="PRO_0000368875" description="ATP synthase subunit b">
    <location>
        <begin position="1"/>
        <end position="156"/>
    </location>
</feature>
<feature type="transmembrane region" description="Helical" evidence="1">
    <location>
        <begin position="3"/>
        <end position="23"/>
    </location>
</feature>
<sequence length="156" mass="17461">MDITFTIFAQSIAFAALIWIVATKIWPPLIKVIEERQQKIAEGLAAADLGQKELAQAQEEIKKTLKNAREKANEIIEQAHARAHQIIEAAKAEAITETNRQQNLAQVEIEAAAKRAREELRKHVSILAVNGAEKLLKREIDVNTHKMLLDELAAEI</sequence>
<proteinExistence type="inferred from homology"/>
<keyword id="KW-0066">ATP synthesis</keyword>
<keyword id="KW-0997">Cell inner membrane</keyword>
<keyword id="KW-1003">Cell membrane</keyword>
<keyword id="KW-0138">CF(0)</keyword>
<keyword id="KW-0375">Hydrogen ion transport</keyword>
<keyword id="KW-0406">Ion transport</keyword>
<keyword id="KW-0472">Membrane</keyword>
<keyword id="KW-0812">Transmembrane</keyword>
<keyword id="KW-1133">Transmembrane helix</keyword>
<keyword id="KW-0813">Transport</keyword>
<evidence type="ECO:0000255" key="1">
    <source>
        <dbReference type="HAMAP-Rule" id="MF_01398"/>
    </source>
</evidence>
<evidence type="ECO:0000305" key="2"/>
<dbReference type="EMBL" id="CP000941">
    <property type="protein sequence ID" value="ACA11498.1"/>
    <property type="status" value="ALT_INIT"/>
    <property type="molecule type" value="Genomic_DNA"/>
</dbReference>
<dbReference type="RefSeq" id="WP_021358235.1">
    <property type="nucleotide sequence ID" value="NC_010513.1"/>
</dbReference>
<dbReference type="SMR" id="B0U5A2"/>
<dbReference type="KEGG" id="xfm:Xfasm12_0489"/>
<dbReference type="HOGENOM" id="CLU_079215_4_5_6"/>
<dbReference type="GO" id="GO:0005886">
    <property type="term" value="C:plasma membrane"/>
    <property type="evidence" value="ECO:0007669"/>
    <property type="project" value="UniProtKB-SubCell"/>
</dbReference>
<dbReference type="GO" id="GO:0045259">
    <property type="term" value="C:proton-transporting ATP synthase complex"/>
    <property type="evidence" value="ECO:0007669"/>
    <property type="project" value="UniProtKB-KW"/>
</dbReference>
<dbReference type="GO" id="GO:0046933">
    <property type="term" value="F:proton-transporting ATP synthase activity, rotational mechanism"/>
    <property type="evidence" value="ECO:0007669"/>
    <property type="project" value="UniProtKB-UniRule"/>
</dbReference>
<dbReference type="GO" id="GO:0046961">
    <property type="term" value="F:proton-transporting ATPase activity, rotational mechanism"/>
    <property type="evidence" value="ECO:0007669"/>
    <property type="project" value="TreeGrafter"/>
</dbReference>
<dbReference type="CDD" id="cd06503">
    <property type="entry name" value="ATP-synt_Fo_b"/>
    <property type="match status" value="1"/>
</dbReference>
<dbReference type="Gene3D" id="6.10.250.1580">
    <property type="match status" value="1"/>
</dbReference>
<dbReference type="HAMAP" id="MF_01398">
    <property type="entry name" value="ATP_synth_b_bprime"/>
    <property type="match status" value="1"/>
</dbReference>
<dbReference type="InterPro" id="IPR028987">
    <property type="entry name" value="ATP_synth_B-like_membr_sf"/>
</dbReference>
<dbReference type="InterPro" id="IPR002146">
    <property type="entry name" value="ATP_synth_b/b'su_bac/chlpt"/>
</dbReference>
<dbReference type="InterPro" id="IPR005864">
    <property type="entry name" value="ATP_synth_F0_bsu_bac"/>
</dbReference>
<dbReference type="InterPro" id="IPR050059">
    <property type="entry name" value="ATP_synthase_B_chain"/>
</dbReference>
<dbReference type="NCBIfam" id="TIGR01144">
    <property type="entry name" value="ATP_synt_b"/>
    <property type="match status" value="1"/>
</dbReference>
<dbReference type="NCBIfam" id="NF004411">
    <property type="entry name" value="PRK05759.1-2"/>
    <property type="match status" value="1"/>
</dbReference>
<dbReference type="PANTHER" id="PTHR33445:SF1">
    <property type="entry name" value="ATP SYNTHASE SUBUNIT B"/>
    <property type="match status" value="1"/>
</dbReference>
<dbReference type="PANTHER" id="PTHR33445">
    <property type="entry name" value="ATP SYNTHASE SUBUNIT B', CHLOROPLASTIC"/>
    <property type="match status" value="1"/>
</dbReference>
<dbReference type="Pfam" id="PF00430">
    <property type="entry name" value="ATP-synt_B"/>
    <property type="match status" value="1"/>
</dbReference>
<dbReference type="SUPFAM" id="SSF81573">
    <property type="entry name" value="F1F0 ATP synthase subunit B, membrane domain"/>
    <property type="match status" value="1"/>
</dbReference>
<organism>
    <name type="scientific">Xylella fastidiosa (strain M12)</name>
    <dbReference type="NCBI Taxonomy" id="405440"/>
    <lineage>
        <taxon>Bacteria</taxon>
        <taxon>Pseudomonadati</taxon>
        <taxon>Pseudomonadota</taxon>
        <taxon>Gammaproteobacteria</taxon>
        <taxon>Lysobacterales</taxon>
        <taxon>Lysobacteraceae</taxon>
        <taxon>Xylella</taxon>
    </lineage>
</organism>